<feature type="chain" id="PRO_0000220289" description="Malonate decarboxylase acyl carrier protein">
    <location>
        <begin position="1"/>
        <end position="99"/>
    </location>
</feature>
<feature type="modified residue" description="O-(phosphoribosyl dephospho-coenzyme A)serine" evidence="1">
    <location>
        <position position="25"/>
    </location>
</feature>
<evidence type="ECO:0000255" key="1">
    <source>
        <dbReference type="HAMAP-Rule" id="MF_00710"/>
    </source>
</evidence>
<protein>
    <recommendedName>
        <fullName evidence="1">Malonate decarboxylase acyl carrier protein</fullName>
    </recommendedName>
    <alternativeName>
        <fullName evidence="1">Malonate decarboxylase subunit delta</fullName>
    </alternativeName>
</protein>
<dbReference type="EMBL" id="AE016853">
    <property type="protein sequence ID" value="AAO58512.1"/>
    <property type="molecule type" value="Genomic_DNA"/>
</dbReference>
<dbReference type="RefSeq" id="NP_794817.1">
    <property type="nucleotide sequence ID" value="NC_004578.1"/>
</dbReference>
<dbReference type="RefSeq" id="WP_003378783.1">
    <property type="nucleotide sequence ID" value="NC_004578.1"/>
</dbReference>
<dbReference type="SMR" id="Q87V56"/>
<dbReference type="STRING" id="223283.PSPTO_5085"/>
<dbReference type="KEGG" id="pst:PSPTO_5085"/>
<dbReference type="PATRIC" id="fig|223283.9.peg.5206"/>
<dbReference type="eggNOG" id="COG3052">
    <property type="taxonomic scope" value="Bacteria"/>
</dbReference>
<dbReference type="HOGENOM" id="CLU_173135_1_0_6"/>
<dbReference type="OrthoDB" id="120290at2"/>
<dbReference type="PhylomeDB" id="Q87V56"/>
<dbReference type="Proteomes" id="UP000002515">
    <property type="component" value="Chromosome"/>
</dbReference>
<dbReference type="GO" id="GO:0005737">
    <property type="term" value="C:cytoplasm"/>
    <property type="evidence" value="ECO:0007669"/>
    <property type="project" value="UniProtKB-SubCell"/>
</dbReference>
<dbReference type="GO" id="GO:0000036">
    <property type="term" value="F:acyl carrier activity"/>
    <property type="evidence" value="ECO:0007669"/>
    <property type="project" value="UniProtKB-UniRule"/>
</dbReference>
<dbReference type="HAMAP" id="MF_00710">
    <property type="entry name" value="Malonate_deCO2ase_dsu"/>
    <property type="match status" value="1"/>
</dbReference>
<dbReference type="InterPro" id="IPR023439">
    <property type="entry name" value="Mal_deCO2ase/Cit_lyase_ACP"/>
</dbReference>
<dbReference type="InterPro" id="IPR009662">
    <property type="entry name" value="Malonate_deCO2ase_dsu"/>
</dbReference>
<dbReference type="NCBIfam" id="TIGR03130">
    <property type="entry name" value="malonate_delta"/>
    <property type="match status" value="1"/>
</dbReference>
<dbReference type="NCBIfam" id="NF002293">
    <property type="entry name" value="PRK01220.1"/>
    <property type="match status" value="1"/>
</dbReference>
<dbReference type="Pfam" id="PF06857">
    <property type="entry name" value="ACP"/>
    <property type="match status" value="1"/>
</dbReference>
<organism>
    <name type="scientific">Pseudomonas syringae pv. tomato (strain ATCC BAA-871 / DC3000)</name>
    <dbReference type="NCBI Taxonomy" id="223283"/>
    <lineage>
        <taxon>Bacteria</taxon>
        <taxon>Pseudomonadati</taxon>
        <taxon>Pseudomonadota</taxon>
        <taxon>Gammaproteobacteria</taxon>
        <taxon>Pseudomonadales</taxon>
        <taxon>Pseudomonadaceae</taxon>
        <taxon>Pseudomonas</taxon>
    </lineage>
</organism>
<reference key="1">
    <citation type="journal article" date="2003" name="Proc. Natl. Acad. Sci. U.S.A.">
        <title>The complete genome sequence of the Arabidopsis and tomato pathogen Pseudomonas syringae pv. tomato DC3000.</title>
        <authorList>
            <person name="Buell C.R."/>
            <person name="Joardar V."/>
            <person name="Lindeberg M."/>
            <person name="Selengut J."/>
            <person name="Paulsen I.T."/>
            <person name="Gwinn M.L."/>
            <person name="Dodson R.J."/>
            <person name="DeBoy R.T."/>
            <person name="Durkin A.S."/>
            <person name="Kolonay J.F."/>
            <person name="Madupu R."/>
            <person name="Daugherty S.C."/>
            <person name="Brinkac L.M."/>
            <person name="Beanan M.J."/>
            <person name="Haft D.H."/>
            <person name="Nelson W.C."/>
            <person name="Davidsen T.M."/>
            <person name="Zafar N."/>
            <person name="Zhou L."/>
            <person name="Liu J."/>
            <person name="Yuan Q."/>
            <person name="Khouri H.M."/>
            <person name="Fedorova N.B."/>
            <person name="Tran B."/>
            <person name="Russell D."/>
            <person name="Berry K.J."/>
            <person name="Utterback T.R."/>
            <person name="Van Aken S.E."/>
            <person name="Feldblyum T.V."/>
            <person name="D'Ascenzo M."/>
            <person name="Deng W.-L."/>
            <person name="Ramos A.R."/>
            <person name="Alfano J.R."/>
            <person name="Cartinhour S."/>
            <person name="Chatterjee A.K."/>
            <person name="Delaney T.P."/>
            <person name="Lazarowitz S.G."/>
            <person name="Martin G.B."/>
            <person name="Schneider D.J."/>
            <person name="Tang X."/>
            <person name="Bender C.L."/>
            <person name="White O."/>
            <person name="Fraser C.M."/>
            <person name="Collmer A."/>
        </authorList>
    </citation>
    <scope>NUCLEOTIDE SEQUENCE [LARGE SCALE GENOMIC DNA]</scope>
    <source>
        <strain>ATCC BAA-871 / DC3000</strain>
    </source>
</reference>
<keyword id="KW-0963">Cytoplasm</keyword>
<keyword id="KW-0597">Phosphoprotein</keyword>
<keyword id="KW-1185">Reference proteome</keyword>
<proteinExistence type="inferred from homology"/>
<comment type="function">
    <text evidence="1">Subunit of malonate decarboxylase, it is an acyl carrier protein to which acetyl and malonyl thioester residues are bound via a 2'-(5''-phosphoribosyl)-3'-dephospho-CoA prosthetic group and turn over during the catalytic mechanism.</text>
</comment>
<comment type="subcellular location">
    <subcellularLocation>
        <location evidence="1">Cytoplasm</location>
    </subcellularLocation>
</comment>
<comment type="PTM">
    <text evidence="1">Covalently binds the prosthetic group of malonate decarboxylase.</text>
</comment>
<comment type="similarity">
    <text evidence="1">Belongs to the MdcC family.</text>
</comment>
<accession>Q87V56</accession>
<name>MDCC_PSESM</name>
<gene>
    <name evidence="1" type="primary">mdcC</name>
    <name type="ordered locus">PSPTO_5085</name>
</gene>
<sequence length="99" mass="10680">METLSFEFPAGQPPKGRALVGVVGSGDLEVLLEPGQPGKLSIQVVTSVNGASLRWKHLFERMFDGQTPPALSIDIHDFGATPGVVRLRLEQGFEEIGHD</sequence>